<accession>Q0AF46</accession>
<name>EFTU2_NITEC</name>
<proteinExistence type="inferred from homology"/>
<keyword id="KW-0963">Cytoplasm</keyword>
<keyword id="KW-0251">Elongation factor</keyword>
<keyword id="KW-0342">GTP-binding</keyword>
<keyword id="KW-0378">Hydrolase</keyword>
<keyword id="KW-0460">Magnesium</keyword>
<keyword id="KW-0479">Metal-binding</keyword>
<keyword id="KW-0547">Nucleotide-binding</keyword>
<keyword id="KW-0648">Protein biosynthesis</keyword>
<protein>
    <recommendedName>
        <fullName evidence="2">Elongation factor Tu 2</fullName>
        <shortName evidence="2">EF-Tu 2</shortName>
        <ecNumber evidence="2">3.6.5.3</ecNumber>
    </recommendedName>
</protein>
<comment type="function">
    <text evidence="2">GTP hydrolase that promotes the GTP-dependent binding of aminoacyl-tRNA to the A-site of ribosomes during protein biosynthesis.</text>
</comment>
<comment type="catalytic activity">
    <reaction evidence="2">
        <text>GTP + H2O = GDP + phosphate + H(+)</text>
        <dbReference type="Rhea" id="RHEA:19669"/>
        <dbReference type="ChEBI" id="CHEBI:15377"/>
        <dbReference type="ChEBI" id="CHEBI:15378"/>
        <dbReference type="ChEBI" id="CHEBI:37565"/>
        <dbReference type="ChEBI" id="CHEBI:43474"/>
        <dbReference type="ChEBI" id="CHEBI:58189"/>
        <dbReference type="EC" id="3.6.5.3"/>
    </reaction>
    <physiologicalReaction direction="left-to-right" evidence="2">
        <dbReference type="Rhea" id="RHEA:19670"/>
    </physiologicalReaction>
</comment>
<comment type="subunit">
    <text evidence="2">Monomer.</text>
</comment>
<comment type="subcellular location">
    <subcellularLocation>
        <location evidence="2">Cytoplasm</location>
    </subcellularLocation>
</comment>
<comment type="similarity">
    <text evidence="2">Belongs to the TRAFAC class translation factor GTPase superfamily. Classic translation factor GTPase family. EF-Tu/EF-1A subfamily.</text>
</comment>
<dbReference type="EC" id="3.6.5.3" evidence="2"/>
<dbReference type="EMBL" id="CP000450">
    <property type="protein sequence ID" value="ABI60036.1"/>
    <property type="molecule type" value="Genomic_DNA"/>
</dbReference>
<dbReference type="RefSeq" id="WP_011634842.1">
    <property type="nucleotide sequence ID" value="NC_008344.1"/>
</dbReference>
<dbReference type="SMR" id="Q0AF46"/>
<dbReference type="STRING" id="335283.Neut_1802"/>
<dbReference type="KEGG" id="net:Neut_1802"/>
<dbReference type="eggNOG" id="COG0050">
    <property type="taxonomic scope" value="Bacteria"/>
</dbReference>
<dbReference type="HOGENOM" id="CLU_007265_0_2_4"/>
<dbReference type="OrthoDB" id="9803139at2"/>
<dbReference type="Proteomes" id="UP000001966">
    <property type="component" value="Chromosome"/>
</dbReference>
<dbReference type="GO" id="GO:0005829">
    <property type="term" value="C:cytosol"/>
    <property type="evidence" value="ECO:0007669"/>
    <property type="project" value="TreeGrafter"/>
</dbReference>
<dbReference type="GO" id="GO:0005525">
    <property type="term" value="F:GTP binding"/>
    <property type="evidence" value="ECO:0007669"/>
    <property type="project" value="UniProtKB-UniRule"/>
</dbReference>
<dbReference type="GO" id="GO:0003924">
    <property type="term" value="F:GTPase activity"/>
    <property type="evidence" value="ECO:0007669"/>
    <property type="project" value="InterPro"/>
</dbReference>
<dbReference type="GO" id="GO:0097216">
    <property type="term" value="F:guanosine tetraphosphate binding"/>
    <property type="evidence" value="ECO:0007669"/>
    <property type="project" value="UniProtKB-ARBA"/>
</dbReference>
<dbReference type="GO" id="GO:0003746">
    <property type="term" value="F:translation elongation factor activity"/>
    <property type="evidence" value="ECO:0007669"/>
    <property type="project" value="UniProtKB-UniRule"/>
</dbReference>
<dbReference type="CDD" id="cd01884">
    <property type="entry name" value="EF_Tu"/>
    <property type="match status" value="1"/>
</dbReference>
<dbReference type="CDD" id="cd03697">
    <property type="entry name" value="EFTU_II"/>
    <property type="match status" value="1"/>
</dbReference>
<dbReference type="CDD" id="cd03707">
    <property type="entry name" value="EFTU_III"/>
    <property type="match status" value="1"/>
</dbReference>
<dbReference type="FunFam" id="2.40.30.10:FF:000001">
    <property type="entry name" value="Elongation factor Tu"/>
    <property type="match status" value="1"/>
</dbReference>
<dbReference type="FunFam" id="3.40.50.300:FF:000003">
    <property type="entry name" value="Elongation factor Tu"/>
    <property type="match status" value="1"/>
</dbReference>
<dbReference type="Gene3D" id="3.40.50.300">
    <property type="entry name" value="P-loop containing nucleotide triphosphate hydrolases"/>
    <property type="match status" value="1"/>
</dbReference>
<dbReference type="Gene3D" id="2.40.30.10">
    <property type="entry name" value="Translation factors"/>
    <property type="match status" value="2"/>
</dbReference>
<dbReference type="HAMAP" id="MF_00118_B">
    <property type="entry name" value="EF_Tu_B"/>
    <property type="match status" value="1"/>
</dbReference>
<dbReference type="InterPro" id="IPR041709">
    <property type="entry name" value="EF-Tu_GTP-bd"/>
</dbReference>
<dbReference type="InterPro" id="IPR050055">
    <property type="entry name" value="EF-Tu_GTPase"/>
</dbReference>
<dbReference type="InterPro" id="IPR004161">
    <property type="entry name" value="EFTu-like_2"/>
</dbReference>
<dbReference type="InterPro" id="IPR033720">
    <property type="entry name" value="EFTU_2"/>
</dbReference>
<dbReference type="InterPro" id="IPR031157">
    <property type="entry name" value="G_TR_CS"/>
</dbReference>
<dbReference type="InterPro" id="IPR027417">
    <property type="entry name" value="P-loop_NTPase"/>
</dbReference>
<dbReference type="InterPro" id="IPR005225">
    <property type="entry name" value="Small_GTP-bd"/>
</dbReference>
<dbReference type="InterPro" id="IPR000795">
    <property type="entry name" value="T_Tr_GTP-bd_dom"/>
</dbReference>
<dbReference type="InterPro" id="IPR009000">
    <property type="entry name" value="Transl_B-barrel_sf"/>
</dbReference>
<dbReference type="InterPro" id="IPR009001">
    <property type="entry name" value="Transl_elong_EF1A/Init_IF2_C"/>
</dbReference>
<dbReference type="InterPro" id="IPR004541">
    <property type="entry name" value="Transl_elong_EFTu/EF1A_bac/org"/>
</dbReference>
<dbReference type="InterPro" id="IPR004160">
    <property type="entry name" value="Transl_elong_EFTu/EF1A_C"/>
</dbReference>
<dbReference type="NCBIfam" id="TIGR00485">
    <property type="entry name" value="EF-Tu"/>
    <property type="match status" value="1"/>
</dbReference>
<dbReference type="NCBIfam" id="NF000766">
    <property type="entry name" value="PRK00049.1"/>
    <property type="match status" value="1"/>
</dbReference>
<dbReference type="NCBIfam" id="NF009372">
    <property type="entry name" value="PRK12735.1"/>
    <property type="match status" value="1"/>
</dbReference>
<dbReference type="NCBIfam" id="NF009373">
    <property type="entry name" value="PRK12736.1"/>
    <property type="match status" value="1"/>
</dbReference>
<dbReference type="NCBIfam" id="TIGR00231">
    <property type="entry name" value="small_GTP"/>
    <property type="match status" value="1"/>
</dbReference>
<dbReference type="PANTHER" id="PTHR43721:SF22">
    <property type="entry name" value="ELONGATION FACTOR TU, MITOCHONDRIAL"/>
    <property type="match status" value="1"/>
</dbReference>
<dbReference type="PANTHER" id="PTHR43721">
    <property type="entry name" value="ELONGATION FACTOR TU-RELATED"/>
    <property type="match status" value="1"/>
</dbReference>
<dbReference type="Pfam" id="PF00009">
    <property type="entry name" value="GTP_EFTU"/>
    <property type="match status" value="1"/>
</dbReference>
<dbReference type="Pfam" id="PF03144">
    <property type="entry name" value="GTP_EFTU_D2"/>
    <property type="match status" value="1"/>
</dbReference>
<dbReference type="Pfam" id="PF03143">
    <property type="entry name" value="GTP_EFTU_D3"/>
    <property type="match status" value="1"/>
</dbReference>
<dbReference type="PRINTS" id="PR00315">
    <property type="entry name" value="ELONGATNFCT"/>
</dbReference>
<dbReference type="SUPFAM" id="SSF50465">
    <property type="entry name" value="EF-Tu/eEF-1alpha/eIF2-gamma C-terminal domain"/>
    <property type="match status" value="1"/>
</dbReference>
<dbReference type="SUPFAM" id="SSF52540">
    <property type="entry name" value="P-loop containing nucleoside triphosphate hydrolases"/>
    <property type="match status" value="1"/>
</dbReference>
<dbReference type="SUPFAM" id="SSF50447">
    <property type="entry name" value="Translation proteins"/>
    <property type="match status" value="1"/>
</dbReference>
<dbReference type="PROSITE" id="PS00301">
    <property type="entry name" value="G_TR_1"/>
    <property type="match status" value="1"/>
</dbReference>
<dbReference type="PROSITE" id="PS51722">
    <property type="entry name" value="G_TR_2"/>
    <property type="match status" value="1"/>
</dbReference>
<reference key="1">
    <citation type="journal article" date="2007" name="Environ. Microbiol.">
        <title>Whole-genome analysis of the ammonia-oxidizing bacterium, Nitrosomonas eutropha C91: implications for niche adaptation.</title>
        <authorList>
            <person name="Stein L.Y."/>
            <person name="Arp D.J."/>
            <person name="Berube P.M."/>
            <person name="Chain P.S."/>
            <person name="Hauser L."/>
            <person name="Jetten M.S."/>
            <person name="Klotz M.G."/>
            <person name="Larimer F.W."/>
            <person name="Norton J.M."/>
            <person name="Op den Camp H.J.M."/>
            <person name="Shin M."/>
            <person name="Wei X."/>
        </authorList>
    </citation>
    <scope>NUCLEOTIDE SEQUENCE [LARGE SCALE GENOMIC DNA]</scope>
    <source>
        <strain>DSM 101675 / C91 / Nm57</strain>
    </source>
</reference>
<feature type="chain" id="PRO_0000337446" description="Elongation factor Tu 2">
    <location>
        <begin position="1"/>
        <end position="396"/>
    </location>
</feature>
<feature type="domain" description="tr-type G">
    <location>
        <begin position="10"/>
        <end position="206"/>
    </location>
</feature>
<feature type="region of interest" description="G1" evidence="1">
    <location>
        <begin position="19"/>
        <end position="26"/>
    </location>
</feature>
<feature type="region of interest" description="G2" evidence="1">
    <location>
        <begin position="60"/>
        <end position="64"/>
    </location>
</feature>
<feature type="region of interest" description="G3" evidence="1">
    <location>
        <begin position="81"/>
        <end position="84"/>
    </location>
</feature>
<feature type="region of interest" description="G4" evidence="1">
    <location>
        <begin position="136"/>
        <end position="139"/>
    </location>
</feature>
<feature type="region of interest" description="G5" evidence="1">
    <location>
        <begin position="174"/>
        <end position="176"/>
    </location>
</feature>
<feature type="binding site" evidence="2">
    <location>
        <begin position="19"/>
        <end position="26"/>
    </location>
    <ligand>
        <name>GTP</name>
        <dbReference type="ChEBI" id="CHEBI:37565"/>
    </ligand>
</feature>
<feature type="binding site" evidence="2">
    <location>
        <position position="26"/>
    </location>
    <ligand>
        <name>Mg(2+)</name>
        <dbReference type="ChEBI" id="CHEBI:18420"/>
    </ligand>
</feature>
<feature type="binding site" evidence="2">
    <location>
        <begin position="81"/>
        <end position="85"/>
    </location>
    <ligand>
        <name>GTP</name>
        <dbReference type="ChEBI" id="CHEBI:37565"/>
    </ligand>
</feature>
<feature type="binding site" evidence="2">
    <location>
        <begin position="136"/>
        <end position="139"/>
    </location>
    <ligand>
        <name>GTP</name>
        <dbReference type="ChEBI" id="CHEBI:37565"/>
    </ligand>
</feature>
<evidence type="ECO:0000250" key="1"/>
<evidence type="ECO:0000255" key="2">
    <source>
        <dbReference type="HAMAP-Rule" id="MF_00118"/>
    </source>
</evidence>
<sequence>MAKSKFERVKPHINVGTIGHVDHGKTTLTAAITTILTRKFGGEAKSYAQIDSAPEERARGITINTSHVEYETDKRHYAHVDCPGHADYVKNMITGAAQMDGAILVVSAADGPMPQTREHILLARQVGVPYIIVFMNKADMVDDAELLELVEMEIRELLSKYDFPGDDTPIIIGSALKALEGDKGDIGEAAILKLAEVLDSYIPEPQRAIDGAFIMPVEDVFSISGRGTVVTGRVERGIVKVGDEIEIVGLRPTIKTTCTGVEMFRKLLDQGQAGDNVGILLRGTKREEVERGQVLAKPGSILPHTKFSAEIYVLSKEEGGRHTPFFAGYRPQFYFRTTDVTGSIELPAGVEMVMPGDNISVNVNLIAPIAMSDGLRFAIREGGRTVGAGVVAKVIE</sequence>
<gene>
    <name evidence="2" type="primary">tuf2</name>
    <name type="ordered locus">Neut_1802</name>
</gene>
<organism>
    <name type="scientific">Nitrosomonas eutropha (strain DSM 101675 / C91 / Nm57)</name>
    <dbReference type="NCBI Taxonomy" id="335283"/>
    <lineage>
        <taxon>Bacteria</taxon>
        <taxon>Pseudomonadati</taxon>
        <taxon>Pseudomonadota</taxon>
        <taxon>Betaproteobacteria</taxon>
        <taxon>Nitrosomonadales</taxon>
        <taxon>Nitrosomonadaceae</taxon>
        <taxon>Nitrosomonas</taxon>
    </lineage>
</organism>